<feature type="chain" id="PRO_0000287491" description="Torsin-4A">
    <location>
        <begin position="1"/>
        <end position="409"/>
    </location>
</feature>
<feature type="transmembrane region" description="Helical" evidence="1">
    <location>
        <begin position="120"/>
        <end position="136"/>
    </location>
</feature>
<feature type="region of interest" description="Disordered" evidence="2">
    <location>
        <begin position="1"/>
        <end position="28"/>
    </location>
</feature>
<feature type="region of interest" description="Disordered" evidence="2">
    <location>
        <begin position="75"/>
        <end position="99"/>
    </location>
</feature>
<feature type="compositionally biased region" description="Basic and acidic residues" evidence="2">
    <location>
        <begin position="1"/>
        <end position="16"/>
    </location>
</feature>
<feature type="compositionally biased region" description="Polar residues" evidence="2">
    <location>
        <begin position="17"/>
        <end position="28"/>
    </location>
</feature>
<feature type="compositionally biased region" description="Basic residues" evidence="2">
    <location>
        <begin position="88"/>
        <end position="98"/>
    </location>
</feature>
<feature type="binding site" evidence="1">
    <location>
        <begin position="192"/>
        <end position="199"/>
    </location>
    <ligand>
        <name>ATP</name>
        <dbReference type="ChEBI" id="CHEBI:30616"/>
    </ligand>
</feature>
<evidence type="ECO:0000255" key="1"/>
<evidence type="ECO:0000256" key="2">
    <source>
        <dbReference type="SAM" id="MobiDB-lite"/>
    </source>
</evidence>
<evidence type="ECO:0000305" key="3"/>
<sequence>MGEQDPSDRLRGDQLKEPNQNGKGSFSQFSSSVRAMVRIRMKYQAIKKRRMEIASATPQIFTSPRSTSPKVFTFDNLHEPVNSNPASPRKRKKKRKGRVLYPTSSLRAVPTKESSRAKNCLYLLCIIVFLQVYNAIENLDDHVLKYDLEGLEKTLKREVFGQQEVAEGLLGHLQDYLSTYVHNKPLVLSFHGPTGVGKSHVGRLLAQHFRSVVGEELVMQYFVLHHCPTDDDIPVCTKSLESHISEMVSQGEEEEKIPVFIFDEVEHMPRQLMDTLRELIQPQNSNKYLNAIYILISNLGHEDITKFVLHNSSIAISGRLSLTQELTPWLRNYLQEHHGLFLDAEYLPFMLLEKSHVMDCFIDEMSREGFYPDRSHVERLAEELSYYIVGEREFSHTGCRQVVAKVNLL</sequence>
<keyword id="KW-0067">ATP-binding</keyword>
<keyword id="KW-0472">Membrane</keyword>
<keyword id="KW-0547">Nucleotide-binding</keyword>
<keyword id="KW-1185">Reference proteome</keyword>
<keyword id="KW-0812">Transmembrane</keyword>
<keyword id="KW-1133">Transmembrane helix</keyword>
<protein>
    <recommendedName>
        <fullName>Torsin-4A</fullName>
    </recommendedName>
    <alternativeName>
        <fullName>Torsin family 4 member A</fullName>
    </alternativeName>
</protein>
<reference key="1">
    <citation type="submission" date="2005-04" db="EMBL/GenBank/DDBJ databases">
        <authorList>
            <consortium name="NIH - Zebrafish Gene Collection (ZGC) project"/>
        </authorList>
    </citation>
    <scope>NUCLEOTIDE SEQUENCE [LARGE SCALE MRNA]</scope>
    <source>
        <tissue>Embryo</tissue>
    </source>
</reference>
<proteinExistence type="evidence at transcript level"/>
<name>TOR4A_DANRE</name>
<gene>
    <name type="primary">tor4a</name>
    <name type="ORF">zgc:110567</name>
</gene>
<accession>Q568B8</accession>
<organism>
    <name type="scientific">Danio rerio</name>
    <name type="common">Zebrafish</name>
    <name type="synonym">Brachydanio rerio</name>
    <dbReference type="NCBI Taxonomy" id="7955"/>
    <lineage>
        <taxon>Eukaryota</taxon>
        <taxon>Metazoa</taxon>
        <taxon>Chordata</taxon>
        <taxon>Craniata</taxon>
        <taxon>Vertebrata</taxon>
        <taxon>Euteleostomi</taxon>
        <taxon>Actinopterygii</taxon>
        <taxon>Neopterygii</taxon>
        <taxon>Teleostei</taxon>
        <taxon>Ostariophysi</taxon>
        <taxon>Cypriniformes</taxon>
        <taxon>Danionidae</taxon>
        <taxon>Danioninae</taxon>
        <taxon>Danio</taxon>
    </lineage>
</organism>
<comment type="subcellular location">
    <subcellularLocation>
        <location evidence="3">Membrane</location>
        <topology evidence="3">Single-pass membrane protein</topology>
    </subcellularLocation>
</comment>
<comment type="similarity">
    <text evidence="3">Belongs to the ClpA/ClpB family. Torsin subfamily.</text>
</comment>
<dbReference type="EMBL" id="BC092931">
    <property type="protein sequence ID" value="AAH92931.1"/>
    <property type="molecule type" value="mRNA"/>
</dbReference>
<dbReference type="RefSeq" id="NP_001017561.2">
    <property type="nucleotide sequence ID" value="NM_001017561.2"/>
</dbReference>
<dbReference type="RefSeq" id="NP_001315625.1">
    <property type="nucleotide sequence ID" value="NM_001328696.1"/>
</dbReference>
<dbReference type="SMR" id="Q568B8"/>
<dbReference type="FunCoup" id="Q568B8">
    <property type="interactions" value="662"/>
</dbReference>
<dbReference type="STRING" id="7955.ENSDARP00000007229"/>
<dbReference type="PaxDb" id="7955-ENSDARP00000007229"/>
<dbReference type="DNASU" id="550133"/>
<dbReference type="Ensembl" id="ENSDART00000055140">
    <property type="protein sequence ID" value="ENSDARP00000055139"/>
    <property type="gene ID" value="ENSDARG00000010145"/>
</dbReference>
<dbReference type="Ensembl" id="ENSDART00000185174">
    <property type="protein sequence ID" value="ENSDARP00000154509"/>
    <property type="gene ID" value="ENSDARG00000037843"/>
</dbReference>
<dbReference type="GeneID" id="550133"/>
<dbReference type="KEGG" id="dre:550133"/>
<dbReference type="AGR" id="ZFIN:ZDB-GENE-050417-9"/>
<dbReference type="CTD" id="550133"/>
<dbReference type="ZFIN" id="ZDB-GENE-050417-9">
    <property type="gene designation" value="tor4aa"/>
</dbReference>
<dbReference type="eggNOG" id="KOG2170">
    <property type="taxonomic scope" value="Eukaryota"/>
</dbReference>
<dbReference type="HOGENOM" id="CLU_053537_1_0_1"/>
<dbReference type="InParanoid" id="Q568B8"/>
<dbReference type="OMA" id="EFAITGC"/>
<dbReference type="PhylomeDB" id="Q568B8"/>
<dbReference type="TreeFam" id="TF314941"/>
<dbReference type="Reactome" id="R-DRE-114608">
    <property type="pathway name" value="Platelet degranulation"/>
</dbReference>
<dbReference type="PRO" id="PR:Q568B8"/>
<dbReference type="Proteomes" id="UP000000437">
    <property type="component" value="Alternate scaffold 10"/>
</dbReference>
<dbReference type="Proteomes" id="UP000000437">
    <property type="component" value="Chromosome 10"/>
</dbReference>
<dbReference type="Bgee" id="ENSDARG00000010145">
    <property type="expression patterns" value="Expressed in granulocyte and 18 other cell types or tissues"/>
</dbReference>
<dbReference type="ExpressionAtlas" id="Q568B8">
    <property type="expression patterns" value="baseline"/>
</dbReference>
<dbReference type="GO" id="GO:0005788">
    <property type="term" value="C:endoplasmic reticulum lumen"/>
    <property type="evidence" value="ECO:0000318"/>
    <property type="project" value="GO_Central"/>
</dbReference>
<dbReference type="GO" id="GO:0016020">
    <property type="term" value="C:membrane"/>
    <property type="evidence" value="ECO:0007669"/>
    <property type="project" value="UniProtKB-SubCell"/>
</dbReference>
<dbReference type="GO" id="GO:0005635">
    <property type="term" value="C:nuclear envelope"/>
    <property type="evidence" value="ECO:0000318"/>
    <property type="project" value="GO_Central"/>
</dbReference>
<dbReference type="GO" id="GO:0005524">
    <property type="term" value="F:ATP binding"/>
    <property type="evidence" value="ECO:0007669"/>
    <property type="project" value="UniProtKB-KW"/>
</dbReference>
<dbReference type="GO" id="GO:0016887">
    <property type="term" value="F:ATP hydrolysis activity"/>
    <property type="evidence" value="ECO:0007669"/>
    <property type="project" value="InterPro"/>
</dbReference>
<dbReference type="FunFam" id="3.40.50.300:FF:002732">
    <property type="entry name" value="Torsin family 4, member Ab"/>
    <property type="match status" value="1"/>
</dbReference>
<dbReference type="Gene3D" id="3.40.50.300">
    <property type="entry name" value="P-loop containing nucleotide triphosphate hydrolases"/>
    <property type="match status" value="1"/>
</dbReference>
<dbReference type="InterPro" id="IPR001270">
    <property type="entry name" value="ClpA/B"/>
</dbReference>
<dbReference type="InterPro" id="IPR027417">
    <property type="entry name" value="P-loop_NTPase"/>
</dbReference>
<dbReference type="InterPro" id="IPR049337">
    <property type="entry name" value="TOR1A_C"/>
</dbReference>
<dbReference type="InterPro" id="IPR010448">
    <property type="entry name" value="Torsin"/>
</dbReference>
<dbReference type="PANTHER" id="PTHR10760">
    <property type="entry name" value="TORSIN"/>
    <property type="match status" value="1"/>
</dbReference>
<dbReference type="PANTHER" id="PTHR10760:SF1">
    <property type="entry name" value="TORSIN-4A"/>
    <property type="match status" value="1"/>
</dbReference>
<dbReference type="Pfam" id="PF21376">
    <property type="entry name" value="TOR1A_C"/>
    <property type="match status" value="1"/>
</dbReference>
<dbReference type="Pfam" id="PF06309">
    <property type="entry name" value="Torsin"/>
    <property type="match status" value="1"/>
</dbReference>
<dbReference type="PRINTS" id="PR00300">
    <property type="entry name" value="CLPPROTEASEA"/>
</dbReference>
<dbReference type="SUPFAM" id="SSF52540">
    <property type="entry name" value="P-loop containing nucleoside triphosphate hydrolases"/>
    <property type="match status" value="1"/>
</dbReference>